<keyword id="KW-0963">Cytoplasm</keyword>
<keyword id="KW-0274">FAD</keyword>
<keyword id="KW-0285">Flavoprotein</keyword>
<keyword id="KW-0520">NAD</keyword>
<keyword id="KW-1185">Reference proteome</keyword>
<keyword id="KW-0819">tRNA processing</keyword>
<comment type="function">
    <text evidence="1">NAD-binding protein involved in the addition of a carboxymethylaminomethyl (cmnm) group at the wobble position (U34) of certain tRNAs, forming tRNA-cmnm(5)s(2)U34.</text>
</comment>
<comment type="cofactor">
    <cofactor evidence="1">
        <name>FAD</name>
        <dbReference type="ChEBI" id="CHEBI:57692"/>
    </cofactor>
</comment>
<comment type="subunit">
    <text evidence="1">Homodimer. Heterotetramer of two MnmE and two MnmG subunits.</text>
</comment>
<comment type="subcellular location">
    <subcellularLocation>
        <location evidence="1">Cytoplasm</location>
    </subcellularLocation>
</comment>
<comment type="similarity">
    <text evidence="1">Belongs to the MnmG family.</text>
</comment>
<feature type="chain" id="PRO_0000117043" description="tRNA uridine 5-carboxymethylaminomethyl modification enzyme MnmG">
    <location>
        <begin position="1"/>
        <end position="627"/>
    </location>
</feature>
<feature type="binding site" evidence="1">
    <location>
        <begin position="11"/>
        <end position="16"/>
    </location>
    <ligand>
        <name>FAD</name>
        <dbReference type="ChEBI" id="CHEBI:57692"/>
    </ligand>
</feature>
<feature type="binding site" evidence="1">
    <location>
        <begin position="270"/>
        <end position="284"/>
    </location>
    <ligand>
        <name>NAD(+)</name>
        <dbReference type="ChEBI" id="CHEBI:57540"/>
    </ligand>
</feature>
<name>MNMG_AGRFC</name>
<proteinExistence type="inferred from homology"/>
<gene>
    <name evidence="1" type="primary">mnmG</name>
    <name evidence="1" type="synonym">gidA</name>
    <name type="ordered locus">Atu2831</name>
    <name type="ORF">AGR_C_5134</name>
</gene>
<dbReference type="EMBL" id="AE007869">
    <property type="protein sequence ID" value="AAK88542.1"/>
    <property type="molecule type" value="Genomic_DNA"/>
</dbReference>
<dbReference type="PIR" id="AF2924">
    <property type="entry name" value="AF2924"/>
</dbReference>
<dbReference type="PIR" id="E97698">
    <property type="entry name" value="E97698"/>
</dbReference>
<dbReference type="RefSeq" id="NP_355757.1">
    <property type="nucleotide sequence ID" value="NC_003062.2"/>
</dbReference>
<dbReference type="RefSeq" id="WP_010972598.1">
    <property type="nucleotide sequence ID" value="NC_003062.2"/>
</dbReference>
<dbReference type="SMR" id="Q8UBM0"/>
<dbReference type="STRING" id="176299.Atu2831"/>
<dbReference type="EnsemblBacteria" id="AAK88542">
    <property type="protein sequence ID" value="AAK88542"/>
    <property type="gene ID" value="Atu2831"/>
</dbReference>
<dbReference type="GeneID" id="1134869"/>
<dbReference type="KEGG" id="atu:Atu2831"/>
<dbReference type="PATRIC" id="fig|176299.10.peg.2840"/>
<dbReference type="eggNOG" id="COG0445">
    <property type="taxonomic scope" value="Bacteria"/>
</dbReference>
<dbReference type="HOGENOM" id="CLU_007831_2_2_5"/>
<dbReference type="OrthoDB" id="9815560at2"/>
<dbReference type="PhylomeDB" id="Q8UBM0"/>
<dbReference type="BioCyc" id="AGRO:ATU2831-MONOMER"/>
<dbReference type="Proteomes" id="UP000000813">
    <property type="component" value="Chromosome circular"/>
</dbReference>
<dbReference type="GO" id="GO:0005829">
    <property type="term" value="C:cytosol"/>
    <property type="evidence" value="ECO:0007669"/>
    <property type="project" value="TreeGrafter"/>
</dbReference>
<dbReference type="GO" id="GO:0050660">
    <property type="term" value="F:flavin adenine dinucleotide binding"/>
    <property type="evidence" value="ECO:0007669"/>
    <property type="project" value="UniProtKB-UniRule"/>
</dbReference>
<dbReference type="GO" id="GO:0030488">
    <property type="term" value="P:tRNA methylation"/>
    <property type="evidence" value="ECO:0007669"/>
    <property type="project" value="TreeGrafter"/>
</dbReference>
<dbReference type="GO" id="GO:0002098">
    <property type="term" value="P:tRNA wobble uridine modification"/>
    <property type="evidence" value="ECO:0007669"/>
    <property type="project" value="InterPro"/>
</dbReference>
<dbReference type="FunFam" id="3.50.50.60:FF:000082">
    <property type="entry name" value="protein MTO1 homolog, mitochondrial isoform X1"/>
    <property type="match status" value="1"/>
</dbReference>
<dbReference type="FunFam" id="1.10.150.570:FF:000001">
    <property type="entry name" value="tRNA uridine 5-carboxymethylaminomethyl modification enzyme MnmG"/>
    <property type="match status" value="1"/>
</dbReference>
<dbReference type="FunFam" id="3.50.50.60:FF:000002">
    <property type="entry name" value="tRNA uridine 5-carboxymethylaminomethyl modification enzyme MnmG"/>
    <property type="match status" value="1"/>
</dbReference>
<dbReference type="Gene3D" id="3.50.50.60">
    <property type="entry name" value="FAD/NAD(P)-binding domain"/>
    <property type="match status" value="2"/>
</dbReference>
<dbReference type="Gene3D" id="1.10.150.570">
    <property type="entry name" value="GidA associated domain, C-terminal subdomain"/>
    <property type="match status" value="1"/>
</dbReference>
<dbReference type="Gene3D" id="1.10.10.1800">
    <property type="entry name" value="tRNA uridine 5-carboxymethylaminomethyl modification enzyme MnmG/GidA"/>
    <property type="match status" value="1"/>
</dbReference>
<dbReference type="HAMAP" id="MF_00129">
    <property type="entry name" value="MnmG_GidA"/>
    <property type="match status" value="1"/>
</dbReference>
<dbReference type="InterPro" id="IPR036188">
    <property type="entry name" value="FAD/NAD-bd_sf"/>
</dbReference>
<dbReference type="InterPro" id="IPR049312">
    <property type="entry name" value="GIDA_C_N"/>
</dbReference>
<dbReference type="InterPro" id="IPR004416">
    <property type="entry name" value="MnmG"/>
</dbReference>
<dbReference type="InterPro" id="IPR002218">
    <property type="entry name" value="MnmG-rel"/>
</dbReference>
<dbReference type="InterPro" id="IPR020595">
    <property type="entry name" value="MnmG-rel_CS"/>
</dbReference>
<dbReference type="InterPro" id="IPR026904">
    <property type="entry name" value="MnmG_C"/>
</dbReference>
<dbReference type="InterPro" id="IPR047001">
    <property type="entry name" value="MnmG_C_subdom"/>
</dbReference>
<dbReference type="InterPro" id="IPR044920">
    <property type="entry name" value="MnmG_C_subdom_sf"/>
</dbReference>
<dbReference type="InterPro" id="IPR040131">
    <property type="entry name" value="MnmG_N"/>
</dbReference>
<dbReference type="NCBIfam" id="TIGR00136">
    <property type="entry name" value="mnmG_gidA"/>
    <property type="match status" value="1"/>
</dbReference>
<dbReference type="PANTHER" id="PTHR11806">
    <property type="entry name" value="GLUCOSE INHIBITED DIVISION PROTEIN A"/>
    <property type="match status" value="1"/>
</dbReference>
<dbReference type="PANTHER" id="PTHR11806:SF0">
    <property type="entry name" value="PROTEIN MTO1 HOMOLOG, MITOCHONDRIAL"/>
    <property type="match status" value="1"/>
</dbReference>
<dbReference type="Pfam" id="PF01134">
    <property type="entry name" value="GIDA"/>
    <property type="match status" value="1"/>
</dbReference>
<dbReference type="Pfam" id="PF21680">
    <property type="entry name" value="GIDA_C_1st"/>
    <property type="match status" value="1"/>
</dbReference>
<dbReference type="Pfam" id="PF13932">
    <property type="entry name" value="SAM_GIDA_C"/>
    <property type="match status" value="1"/>
</dbReference>
<dbReference type="SMART" id="SM01228">
    <property type="entry name" value="GIDA_assoc_3"/>
    <property type="match status" value="1"/>
</dbReference>
<dbReference type="SUPFAM" id="SSF51905">
    <property type="entry name" value="FAD/NAD(P)-binding domain"/>
    <property type="match status" value="1"/>
</dbReference>
<dbReference type="PROSITE" id="PS01280">
    <property type="entry name" value="GIDA_1"/>
    <property type="match status" value="1"/>
</dbReference>
<dbReference type="PROSITE" id="PS01281">
    <property type="entry name" value="GIDA_2"/>
    <property type="match status" value="1"/>
</dbReference>
<organism>
    <name type="scientific">Agrobacterium fabrum (strain C58 / ATCC 33970)</name>
    <name type="common">Agrobacterium tumefaciens (strain C58)</name>
    <dbReference type="NCBI Taxonomy" id="176299"/>
    <lineage>
        <taxon>Bacteria</taxon>
        <taxon>Pseudomonadati</taxon>
        <taxon>Pseudomonadota</taxon>
        <taxon>Alphaproteobacteria</taxon>
        <taxon>Hyphomicrobiales</taxon>
        <taxon>Rhizobiaceae</taxon>
        <taxon>Rhizobium/Agrobacterium group</taxon>
        <taxon>Agrobacterium</taxon>
        <taxon>Agrobacterium tumefaciens complex</taxon>
    </lineage>
</organism>
<accession>Q8UBM0</accession>
<evidence type="ECO:0000255" key="1">
    <source>
        <dbReference type="HAMAP-Rule" id="MF_00129"/>
    </source>
</evidence>
<protein>
    <recommendedName>
        <fullName evidence="1">tRNA uridine 5-carboxymethylaminomethyl modification enzyme MnmG</fullName>
    </recommendedName>
    <alternativeName>
        <fullName evidence="1">Glucose-inhibited division protein A</fullName>
    </alternativeName>
</protein>
<reference key="1">
    <citation type="journal article" date="2001" name="Science">
        <title>The genome of the natural genetic engineer Agrobacterium tumefaciens C58.</title>
        <authorList>
            <person name="Wood D.W."/>
            <person name="Setubal J.C."/>
            <person name="Kaul R."/>
            <person name="Monks D.E."/>
            <person name="Kitajima J.P."/>
            <person name="Okura V.K."/>
            <person name="Zhou Y."/>
            <person name="Chen L."/>
            <person name="Wood G.E."/>
            <person name="Almeida N.F. Jr."/>
            <person name="Woo L."/>
            <person name="Chen Y."/>
            <person name="Paulsen I.T."/>
            <person name="Eisen J.A."/>
            <person name="Karp P.D."/>
            <person name="Bovee D. Sr."/>
            <person name="Chapman P."/>
            <person name="Clendenning J."/>
            <person name="Deatherage G."/>
            <person name="Gillet W."/>
            <person name="Grant C."/>
            <person name="Kutyavin T."/>
            <person name="Levy R."/>
            <person name="Li M.-J."/>
            <person name="McClelland E."/>
            <person name="Palmieri A."/>
            <person name="Raymond C."/>
            <person name="Rouse G."/>
            <person name="Saenphimmachak C."/>
            <person name="Wu Z."/>
            <person name="Romero P."/>
            <person name="Gordon D."/>
            <person name="Zhang S."/>
            <person name="Yoo H."/>
            <person name="Tao Y."/>
            <person name="Biddle P."/>
            <person name="Jung M."/>
            <person name="Krespan W."/>
            <person name="Perry M."/>
            <person name="Gordon-Kamm B."/>
            <person name="Liao L."/>
            <person name="Kim S."/>
            <person name="Hendrick C."/>
            <person name="Zhao Z.-Y."/>
            <person name="Dolan M."/>
            <person name="Chumley F."/>
            <person name="Tingey S.V."/>
            <person name="Tomb J.-F."/>
            <person name="Gordon M.P."/>
            <person name="Olson M.V."/>
            <person name="Nester E.W."/>
        </authorList>
    </citation>
    <scope>NUCLEOTIDE SEQUENCE [LARGE SCALE GENOMIC DNA]</scope>
    <source>
        <strain>C58 / ATCC 33970</strain>
    </source>
</reference>
<reference key="2">
    <citation type="journal article" date="2001" name="Science">
        <title>Genome sequence of the plant pathogen and biotechnology agent Agrobacterium tumefaciens C58.</title>
        <authorList>
            <person name="Goodner B."/>
            <person name="Hinkle G."/>
            <person name="Gattung S."/>
            <person name="Miller N."/>
            <person name="Blanchard M."/>
            <person name="Qurollo B."/>
            <person name="Goldman B.S."/>
            <person name="Cao Y."/>
            <person name="Askenazi M."/>
            <person name="Halling C."/>
            <person name="Mullin L."/>
            <person name="Houmiel K."/>
            <person name="Gordon J."/>
            <person name="Vaudin M."/>
            <person name="Iartchouk O."/>
            <person name="Epp A."/>
            <person name="Liu F."/>
            <person name="Wollam C."/>
            <person name="Allinger M."/>
            <person name="Doughty D."/>
            <person name="Scott C."/>
            <person name="Lappas C."/>
            <person name="Markelz B."/>
            <person name="Flanagan C."/>
            <person name="Crowell C."/>
            <person name="Gurson J."/>
            <person name="Lomo C."/>
            <person name="Sear C."/>
            <person name="Strub G."/>
            <person name="Cielo C."/>
            <person name="Slater S."/>
        </authorList>
    </citation>
    <scope>NUCLEOTIDE SEQUENCE [LARGE SCALE GENOMIC DNA]</scope>
    <source>
        <strain>C58 / ATCC 33970</strain>
    </source>
</reference>
<sequence length="627" mass="68766">MHQSFDVVVIGGGHAGSEAAAAAARHGAKTALVTHKREAIGVMSCNPAIGGLGKGHLVREIDALDGLMGRVADAAGIQFRMLNRKKGPAVRGPRTQADRRLYREAMQREIDAMDNLTIIEGDAFDIEMDNDRVAAVIMKNGSRIPCGAVVLTSGTFLRGLIHIGSEKIPAGRVGEMPSLGLSDTLSRLGLAMGRLKTGTPARLDGRTIDWNAVDRQAADEDPVPFSFMTDHILNPQIECGVTRTTPASHKIIQDNIHLSAMYSGQIEGVGPRYCPSIEDKITRFGERDGHQIFLEPEGLDDYTIYPNGISTSLPAFVQEQFIRTIPGLEQVTILQPGYAIEYDYVDPRELKPSLECRKIPGLFLAGQINGTTGYEEAGAQGLVAGLNASLYAGSADPLHFSRTESYIGVMIDDLTSKGVSEPYRMFTSRAEYRLSLRVDNADLRLTPVAQKAGILGRERQQRFTDFLSDLDSVRALMKELSISPSQAAKQGLKLNQDGQRRSVYELLAYPDMTLQALAEHWPELNRLNAKVAEVLQIEASYAVYMQRQSADIVDIKRDEDRKIPDDFDFQSLSGLSNELKQKLEKARPENIAQAARVDGMTPAAISLLLALLRKGTATRSEQLRMHQ</sequence>